<reference key="1">
    <citation type="journal article" date="2002" name="DNA Res.">
        <title>Complete genomic sequence of nitrogen-fixing symbiotic bacterium Bradyrhizobium japonicum USDA110.</title>
        <authorList>
            <person name="Kaneko T."/>
            <person name="Nakamura Y."/>
            <person name="Sato S."/>
            <person name="Minamisawa K."/>
            <person name="Uchiumi T."/>
            <person name="Sasamoto S."/>
            <person name="Watanabe A."/>
            <person name="Idesawa K."/>
            <person name="Iriguchi M."/>
            <person name="Kawashima K."/>
            <person name="Kohara M."/>
            <person name="Matsumoto M."/>
            <person name="Shimpo S."/>
            <person name="Tsuruoka H."/>
            <person name="Wada T."/>
            <person name="Yamada M."/>
            <person name="Tabata S."/>
        </authorList>
    </citation>
    <scope>NUCLEOTIDE SEQUENCE [LARGE SCALE GENOMIC DNA]</scope>
    <source>
        <strain>JCM 10833 / BCRC 13528 / IAM 13628 / NBRC 14792 / USDA 110</strain>
    </source>
</reference>
<evidence type="ECO:0000255" key="1">
    <source>
        <dbReference type="HAMAP-Rule" id="MF_00532"/>
    </source>
</evidence>
<evidence type="ECO:0000305" key="2"/>
<accession>Q89KE5</accession>
<sequence length="159" mass="17660">MAESIQSLDQLSQLKTAAAPDAPKHEKKVDKFNRAYATGKRKDAVARVWIKPGAGKVTVNSREVEVYFARPVLRMMIEQPFSVAQRSGQYDVICTVAGGGLSGQAGAVRHGISKALTYFEPELRTVLKKGGFLTRDSRVVERKKYGKAKARRSFQFSKR</sequence>
<protein>
    <recommendedName>
        <fullName evidence="1">Small ribosomal subunit protein uS9</fullName>
    </recommendedName>
    <alternativeName>
        <fullName evidence="2">30S ribosomal protein S9</fullName>
    </alternativeName>
</protein>
<proteinExistence type="inferred from homology"/>
<gene>
    <name evidence="1" type="primary">rpsI</name>
    <name type="ordered locus">bll4962</name>
</gene>
<name>RS9_BRADU</name>
<keyword id="KW-1185">Reference proteome</keyword>
<keyword id="KW-0687">Ribonucleoprotein</keyword>
<keyword id="KW-0689">Ribosomal protein</keyword>
<organism>
    <name type="scientific">Bradyrhizobium diazoefficiens (strain JCM 10833 / BCRC 13528 / IAM 13628 / NBRC 14792 / USDA 110)</name>
    <dbReference type="NCBI Taxonomy" id="224911"/>
    <lineage>
        <taxon>Bacteria</taxon>
        <taxon>Pseudomonadati</taxon>
        <taxon>Pseudomonadota</taxon>
        <taxon>Alphaproteobacteria</taxon>
        <taxon>Hyphomicrobiales</taxon>
        <taxon>Nitrobacteraceae</taxon>
        <taxon>Bradyrhizobium</taxon>
    </lineage>
</organism>
<dbReference type="EMBL" id="BA000040">
    <property type="protein sequence ID" value="BAC50227.1"/>
    <property type="molecule type" value="Genomic_DNA"/>
</dbReference>
<dbReference type="RefSeq" id="NP_771602.1">
    <property type="nucleotide sequence ID" value="NC_004463.1"/>
</dbReference>
<dbReference type="RefSeq" id="WP_011087725.1">
    <property type="nucleotide sequence ID" value="NZ_CP011360.1"/>
</dbReference>
<dbReference type="SMR" id="Q89KE5"/>
<dbReference type="FunCoup" id="Q89KE5">
    <property type="interactions" value="906"/>
</dbReference>
<dbReference type="STRING" id="224911.AAV28_22165"/>
<dbReference type="EnsemblBacteria" id="BAC50227">
    <property type="protein sequence ID" value="BAC50227"/>
    <property type="gene ID" value="BAC50227"/>
</dbReference>
<dbReference type="GeneID" id="46491970"/>
<dbReference type="KEGG" id="bja:bll4962"/>
<dbReference type="PATRIC" id="fig|224911.44.peg.4816"/>
<dbReference type="eggNOG" id="COG0103">
    <property type="taxonomic scope" value="Bacteria"/>
</dbReference>
<dbReference type="HOGENOM" id="CLU_046483_2_0_5"/>
<dbReference type="InParanoid" id="Q89KE5"/>
<dbReference type="OrthoDB" id="9803965at2"/>
<dbReference type="PhylomeDB" id="Q89KE5"/>
<dbReference type="Proteomes" id="UP000002526">
    <property type="component" value="Chromosome"/>
</dbReference>
<dbReference type="GO" id="GO:0022627">
    <property type="term" value="C:cytosolic small ribosomal subunit"/>
    <property type="evidence" value="ECO:0000318"/>
    <property type="project" value="GO_Central"/>
</dbReference>
<dbReference type="GO" id="GO:0003723">
    <property type="term" value="F:RNA binding"/>
    <property type="evidence" value="ECO:0000318"/>
    <property type="project" value="GO_Central"/>
</dbReference>
<dbReference type="GO" id="GO:0003735">
    <property type="term" value="F:structural constituent of ribosome"/>
    <property type="evidence" value="ECO:0000318"/>
    <property type="project" value="GO_Central"/>
</dbReference>
<dbReference type="GO" id="GO:0006412">
    <property type="term" value="P:translation"/>
    <property type="evidence" value="ECO:0007669"/>
    <property type="project" value="UniProtKB-UniRule"/>
</dbReference>
<dbReference type="FunFam" id="3.30.230.10:FF:000034">
    <property type="entry name" value="30S ribosomal protein S9"/>
    <property type="match status" value="1"/>
</dbReference>
<dbReference type="Gene3D" id="3.30.230.10">
    <property type="match status" value="1"/>
</dbReference>
<dbReference type="HAMAP" id="MF_00532_B">
    <property type="entry name" value="Ribosomal_uS9_B"/>
    <property type="match status" value="1"/>
</dbReference>
<dbReference type="InterPro" id="IPR020568">
    <property type="entry name" value="Ribosomal_Su5_D2-typ_SF"/>
</dbReference>
<dbReference type="InterPro" id="IPR000754">
    <property type="entry name" value="Ribosomal_uS9"/>
</dbReference>
<dbReference type="InterPro" id="IPR023035">
    <property type="entry name" value="Ribosomal_uS9_bac/plastid"/>
</dbReference>
<dbReference type="InterPro" id="IPR020574">
    <property type="entry name" value="Ribosomal_uS9_CS"/>
</dbReference>
<dbReference type="InterPro" id="IPR014721">
    <property type="entry name" value="Ribsml_uS5_D2-typ_fold_subgr"/>
</dbReference>
<dbReference type="NCBIfam" id="NF001099">
    <property type="entry name" value="PRK00132.1"/>
    <property type="match status" value="1"/>
</dbReference>
<dbReference type="PANTHER" id="PTHR21569">
    <property type="entry name" value="RIBOSOMAL PROTEIN S9"/>
    <property type="match status" value="1"/>
</dbReference>
<dbReference type="PANTHER" id="PTHR21569:SF1">
    <property type="entry name" value="SMALL RIBOSOMAL SUBUNIT PROTEIN US9M"/>
    <property type="match status" value="1"/>
</dbReference>
<dbReference type="Pfam" id="PF00380">
    <property type="entry name" value="Ribosomal_S9"/>
    <property type="match status" value="1"/>
</dbReference>
<dbReference type="SUPFAM" id="SSF54211">
    <property type="entry name" value="Ribosomal protein S5 domain 2-like"/>
    <property type="match status" value="1"/>
</dbReference>
<dbReference type="PROSITE" id="PS00360">
    <property type="entry name" value="RIBOSOMAL_S9"/>
    <property type="match status" value="1"/>
</dbReference>
<feature type="chain" id="PRO_0000111332" description="Small ribosomal subunit protein uS9">
    <location>
        <begin position="1"/>
        <end position="159"/>
    </location>
</feature>
<comment type="similarity">
    <text evidence="1">Belongs to the universal ribosomal protein uS9 family.</text>
</comment>